<dbReference type="EMBL" id="CP000813">
    <property type="protein sequence ID" value="ABV60825.1"/>
    <property type="molecule type" value="Genomic_DNA"/>
</dbReference>
<dbReference type="RefSeq" id="WP_003217190.1">
    <property type="nucleotide sequence ID" value="NZ_VEIS01000020.1"/>
</dbReference>
<dbReference type="SMR" id="A8F9A8"/>
<dbReference type="STRING" id="315750.BPUM_0126"/>
<dbReference type="GeneID" id="66361756"/>
<dbReference type="KEGG" id="bpu:BPUM_0126"/>
<dbReference type="eggNOG" id="COG0361">
    <property type="taxonomic scope" value="Bacteria"/>
</dbReference>
<dbReference type="HOGENOM" id="CLU_151267_1_0_9"/>
<dbReference type="OrthoDB" id="9803250at2"/>
<dbReference type="Proteomes" id="UP000001355">
    <property type="component" value="Chromosome"/>
</dbReference>
<dbReference type="GO" id="GO:0005829">
    <property type="term" value="C:cytosol"/>
    <property type="evidence" value="ECO:0007669"/>
    <property type="project" value="TreeGrafter"/>
</dbReference>
<dbReference type="GO" id="GO:0043022">
    <property type="term" value="F:ribosome binding"/>
    <property type="evidence" value="ECO:0007669"/>
    <property type="project" value="UniProtKB-UniRule"/>
</dbReference>
<dbReference type="GO" id="GO:0019843">
    <property type="term" value="F:rRNA binding"/>
    <property type="evidence" value="ECO:0007669"/>
    <property type="project" value="UniProtKB-UniRule"/>
</dbReference>
<dbReference type="GO" id="GO:0003743">
    <property type="term" value="F:translation initiation factor activity"/>
    <property type="evidence" value="ECO:0007669"/>
    <property type="project" value="UniProtKB-UniRule"/>
</dbReference>
<dbReference type="CDD" id="cd04451">
    <property type="entry name" value="S1_IF1"/>
    <property type="match status" value="1"/>
</dbReference>
<dbReference type="FunFam" id="2.40.50.140:FF:000002">
    <property type="entry name" value="Translation initiation factor IF-1"/>
    <property type="match status" value="1"/>
</dbReference>
<dbReference type="Gene3D" id="2.40.50.140">
    <property type="entry name" value="Nucleic acid-binding proteins"/>
    <property type="match status" value="1"/>
</dbReference>
<dbReference type="HAMAP" id="MF_00075">
    <property type="entry name" value="IF_1"/>
    <property type="match status" value="1"/>
</dbReference>
<dbReference type="InterPro" id="IPR012340">
    <property type="entry name" value="NA-bd_OB-fold"/>
</dbReference>
<dbReference type="InterPro" id="IPR006196">
    <property type="entry name" value="RNA-binding_domain_S1_IF1"/>
</dbReference>
<dbReference type="InterPro" id="IPR003029">
    <property type="entry name" value="S1_domain"/>
</dbReference>
<dbReference type="InterPro" id="IPR004368">
    <property type="entry name" value="TIF_IF1"/>
</dbReference>
<dbReference type="NCBIfam" id="TIGR00008">
    <property type="entry name" value="infA"/>
    <property type="match status" value="1"/>
</dbReference>
<dbReference type="PANTHER" id="PTHR33370">
    <property type="entry name" value="TRANSLATION INITIATION FACTOR IF-1, CHLOROPLASTIC"/>
    <property type="match status" value="1"/>
</dbReference>
<dbReference type="PANTHER" id="PTHR33370:SF1">
    <property type="entry name" value="TRANSLATION INITIATION FACTOR IF-1, CHLOROPLASTIC"/>
    <property type="match status" value="1"/>
</dbReference>
<dbReference type="Pfam" id="PF01176">
    <property type="entry name" value="eIF-1a"/>
    <property type="match status" value="1"/>
</dbReference>
<dbReference type="SMART" id="SM00316">
    <property type="entry name" value="S1"/>
    <property type="match status" value="1"/>
</dbReference>
<dbReference type="SUPFAM" id="SSF50249">
    <property type="entry name" value="Nucleic acid-binding proteins"/>
    <property type="match status" value="1"/>
</dbReference>
<dbReference type="PROSITE" id="PS50832">
    <property type="entry name" value="S1_IF1_TYPE"/>
    <property type="match status" value="1"/>
</dbReference>
<accession>A8F9A8</accession>
<organism>
    <name type="scientific">Bacillus pumilus (strain SAFR-032)</name>
    <dbReference type="NCBI Taxonomy" id="315750"/>
    <lineage>
        <taxon>Bacteria</taxon>
        <taxon>Bacillati</taxon>
        <taxon>Bacillota</taxon>
        <taxon>Bacilli</taxon>
        <taxon>Bacillales</taxon>
        <taxon>Bacillaceae</taxon>
        <taxon>Bacillus</taxon>
    </lineage>
</organism>
<sequence length="72" mass="8171">MAKDDVIEVEGTVAETLPNAMFKVELENGHTVLAHVSGKIRMHFIRILPGDKVTVELSPYDLTRGRITYRYK</sequence>
<protein>
    <recommendedName>
        <fullName evidence="1">Translation initiation factor IF-1</fullName>
    </recommendedName>
</protein>
<evidence type="ECO:0000255" key="1">
    <source>
        <dbReference type="HAMAP-Rule" id="MF_00075"/>
    </source>
</evidence>
<name>IF1_BACP2</name>
<gene>
    <name evidence="1" type="primary">infA</name>
    <name type="ordered locus">BPUM_0126</name>
</gene>
<reference key="1">
    <citation type="journal article" date="2007" name="PLoS ONE">
        <title>Paradoxical DNA repair and peroxide resistance gene conservation in Bacillus pumilus SAFR-032.</title>
        <authorList>
            <person name="Gioia J."/>
            <person name="Yerrapragada S."/>
            <person name="Qin X."/>
            <person name="Jiang H."/>
            <person name="Igboeli O.C."/>
            <person name="Muzny D."/>
            <person name="Dugan-Rocha S."/>
            <person name="Ding Y."/>
            <person name="Hawes A."/>
            <person name="Liu W."/>
            <person name="Perez L."/>
            <person name="Kovar C."/>
            <person name="Dinh H."/>
            <person name="Lee S."/>
            <person name="Nazareth L."/>
            <person name="Blyth P."/>
            <person name="Holder M."/>
            <person name="Buhay C."/>
            <person name="Tirumalai M.R."/>
            <person name="Liu Y."/>
            <person name="Dasgupta I."/>
            <person name="Bokhetache L."/>
            <person name="Fujita M."/>
            <person name="Karouia F."/>
            <person name="Eswara Moorthy P."/>
            <person name="Siefert J."/>
            <person name="Uzman A."/>
            <person name="Buzumbo P."/>
            <person name="Verma A."/>
            <person name="Zwiya H."/>
            <person name="McWilliams B.D."/>
            <person name="Olowu A."/>
            <person name="Clinkenbeard K.D."/>
            <person name="Newcombe D."/>
            <person name="Golebiewski L."/>
            <person name="Petrosino J.F."/>
            <person name="Nicholson W.L."/>
            <person name="Fox G.E."/>
            <person name="Venkateswaran K."/>
            <person name="Highlander S.K."/>
            <person name="Weinstock G.M."/>
        </authorList>
    </citation>
    <scope>NUCLEOTIDE SEQUENCE [LARGE SCALE GENOMIC DNA]</scope>
    <source>
        <strain>SAFR-032</strain>
    </source>
</reference>
<comment type="function">
    <text evidence="1">One of the essential components for the initiation of protein synthesis. Stabilizes the binding of IF-2 and IF-3 on the 30S subunit to which N-formylmethionyl-tRNA(fMet) subsequently binds. Helps modulate mRNA selection, yielding the 30S pre-initiation complex (PIC). Upon addition of the 50S ribosomal subunit IF-1, IF-2 and IF-3 are released leaving the mature 70S translation initiation complex.</text>
</comment>
<comment type="subunit">
    <text evidence="1">Component of the 30S ribosomal translation pre-initiation complex which assembles on the 30S ribosome in the order IF-2 and IF-3, IF-1 and N-formylmethionyl-tRNA(fMet); mRNA recruitment can occur at any time during PIC assembly.</text>
</comment>
<comment type="subcellular location">
    <subcellularLocation>
        <location evidence="1">Cytoplasm</location>
    </subcellularLocation>
</comment>
<comment type="similarity">
    <text evidence="1">Belongs to the IF-1 family.</text>
</comment>
<feature type="chain" id="PRO_0000338767" description="Translation initiation factor IF-1">
    <location>
        <begin position="1"/>
        <end position="72"/>
    </location>
</feature>
<feature type="domain" description="S1-like" evidence="1">
    <location>
        <begin position="1"/>
        <end position="72"/>
    </location>
</feature>
<feature type="modified residue" description="Phosphotyrosine" evidence="1">
    <location>
        <position position="60"/>
    </location>
</feature>
<keyword id="KW-0963">Cytoplasm</keyword>
<keyword id="KW-0396">Initiation factor</keyword>
<keyword id="KW-0597">Phosphoprotein</keyword>
<keyword id="KW-0648">Protein biosynthesis</keyword>
<keyword id="KW-0694">RNA-binding</keyword>
<keyword id="KW-0699">rRNA-binding</keyword>
<proteinExistence type="inferred from homology"/>